<evidence type="ECO:0000255" key="1">
    <source>
        <dbReference type="HAMAP-Rule" id="MF_00008"/>
    </source>
</evidence>
<proteinExistence type="inferred from homology"/>
<comment type="function">
    <text evidence="1">Catalyzes the reductive methylation of 2'-deoxyuridine-5'-monophosphate (dUMP) to 2'-deoxythymidine-5'-monophosphate (dTMP) while utilizing 5,10-methylenetetrahydrofolate (mTHF) as the methyl donor and reductant in the reaction, yielding dihydrofolate (DHF) as a by-product. This enzymatic reaction provides an intracellular de novo source of dTMP, an essential precursor for DNA biosynthesis.</text>
</comment>
<comment type="catalytic activity">
    <reaction evidence="1">
        <text>dUMP + (6R)-5,10-methylene-5,6,7,8-tetrahydrofolate = 7,8-dihydrofolate + dTMP</text>
        <dbReference type="Rhea" id="RHEA:12104"/>
        <dbReference type="ChEBI" id="CHEBI:15636"/>
        <dbReference type="ChEBI" id="CHEBI:57451"/>
        <dbReference type="ChEBI" id="CHEBI:63528"/>
        <dbReference type="ChEBI" id="CHEBI:246422"/>
        <dbReference type="EC" id="2.1.1.45"/>
    </reaction>
</comment>
<comment type="pathway">
    <text evidence="1">Pyrimidine metabolism; dTTP biosynthesis.</text>
</comment>
<comment type="subunit">
    <text evidence="1">Homodimer.</text>
</comment>
<comment type="subcellular location">
    <subcellularLocation>
        <location evidence="1">Cytoplasm</location>
    </subcellularLocation>
</comment>
<comment type="similarity">
    <text evidence="1">Belongs to the thymidylate synthase family. Bacterial-type ThyA subfamily.</text>
</comment>
<sequence>MIQYHDLLERILSDGTEKHDRTGTGTLSVFGHQMRFNLAAGFPMLTTKRLPLKAIVHELLWFLQGDTNIKYLRDNGVTIWDEWADANGDLGPVYGAQWRSWPAADGRSIDQIANIVEMIKRNPDSRRLIVTAWNPADVDRMALPPCHCLFQFYVAGGKLSCQLYQRSADVFLGVPFNIASYALLTMMIAQVTGLKPGEFIHTLGDAHLYSNHLEQARLQLTRAPRALPEMVIDPAVKDVFGFRYEDFTLQGYDPHPHIKAEVAV</sequence>
<reference key="1">
    <citation type="submission" date="2006-03" db="EMBL/GenBank/DDBJ databases">
        <title>Complete sequence of Rhodopseudomonas palustris BisB5.</title>
        <authorList>
            <consortium name="US DOE Joint Genome Institute"/>
            <person name="Copeland A."/>
            <person name="Lucas S."/>
            <person name="Lapidus A."/>
            <person name="Barry K."/>
            <person name="Detter J.C."/>
            <person name="Glavina del Rio T."/>
            <person name="Hammon N."/>
            <person name="Israni S."/>
            <person name="Dalin E."/>
            <person name="Tice H."/>
            <person name="Pitluck S."/>
            <person name="Chain P."/>
            <person name="Malfatti S."/>
            <person name="Shin M."/>
            <person name="Vergez L."/>
            <person name="Schmutz J."/>
            <person name="Larimer F."/>
            <person name="Land M."/>
            <person name="Hauser L."/>
            <person name="Pelletier D.A."/>
            <person name="Kyrpides N."/>
            <person name="Lykidis A."/>
            <person name="Oda Y."/>
            <person name="Harwood C.S."/>
            <person name="Richardson P."/>
        </authorList>
    </citation>
    <scope>NUCLEOTIDE SEQUENCE [LARGE SCALE GENOMIC DNA]</scope>
    <source>
        <strain>BisB5</strain>
    </source>
</reference>
<protein>
    <recommendedName>
        <fullName evidence="1">Thymidylate synthase</fullName>
        <shortName evidence="1">TS</shortName>
        <shortName evidence="1">TSase</shortName>
        <ecNumber evidence="1">2.1.1.45</ecNumber>
    </recommendedName>
</protein>
<organism>
    <name type="scientific">Rhodopseudomonas palustris (strain BisB5)</name>
    <dbReference type="NCBI Taxonomy" id="316057"/>
    <lineage>
        <taxon>Bacteria</taxon>
        <taxon>Pseudomonadati</taxon>
        <taxon>Pseudomonadota</taxon>
        <taxon>Alphaproteobacteria</taxon>
        <taxon>Hyphomicrobiales</taxon>
        <taxon>Nitrobacteraceae</taxon>
        <taxon>Rhodopseudomonas</taxon>
    </lineage>
</organism>
<accession>Q134B1</accession>
<feature type="chain" id="PRO_1000000661" description="Thymidylate synthase">
    <location>
        <begin position="1"/>
        <end position="264"/>
    </location>
</feature>
<feature type="active site" description="Nucleophile" evidence="1">
    <location>
        <position position="146"/>
    </location>
</feature>
<feature type="binding site" description="in other chain" evidence="1">
    <location>
        <position position="21"/>
    </location>
    <ligand>
        <name>dUMP</name>
        <dbReference type="ChEBI" id="CHEBI:246422"/>
        <note>ligand shared between dimeric partners</note>
    </ligand>
</feature>
<feature type="binding site" evidence="1">
    <location>
        <begin position="126"/>
        <end position="127"/>
    </location>
    <ligand>
        <name>dUMP</name>
        <dbReference type="ChEBI" id="CHEBI:246422"/>
        <note>ligand shared between dimeric partners</note>
    </ligand>
</feature>
<feature type="binding site" description="in other chain" evidence="1">
    <location>
        <begin position="166"/>
        <end position="169"/>
    </location>
    <ligand>
        <name>dUMP</name>
        <dbReference type="ChEBI" id="CHEBI:246422"/>
        <note>ligand shared between dimeric partners</note>
    </ligand>
</feature>
<feature type="binding site" evidence="1">
    <location>
        <position position="169"/>
    </location>
    <ligand>
        <name>(6R)-5,10-methylene-5,6,7,8-tetrahydrofolate</name>
        <dbReference type="ChEBI" id="CHEBI:15636"/>
    </ligand>
</feature>
<feature type="binding site" description="in other chain" evidence="1">
    <location>
        <position position="177"/>
    </location>
    <ligand>
        <name>dUMP</name>
        <dbReference type="ChEBI" id="CHEBI:246422"/>
        <note>ligand shared between dimeric partners</note>
    </ligand>
</feature>
<feature type="binding site" description="in other chain" evidence="1">
    <location>
        <begin position="207"/>
        <end position="209"/>
    </location>
    <ligand>
        <name>dUMP</name>
        <dbReference type="ChEBI" id="CHEBI:246422"/>
        <note>ligand shared between dimeric partners</note>
    </ligand>
</feature>
<feature type="binding site" evidence="1">
    <location>
        <position position="263"/>
    </location>
    <ligand>
        <name>(6R)-5,10-methylene-5,6,7,8-tetrahydrofolate</name>
        <dbReference type="ChEBI" id="CHEBI:15636"/>
    </ligand>
</feature>
<keyword id="KW-0963">Cytoplasm</keyword>
<keyword id="KW-0489">Methyltransferase</keyword>
<keyword id="KW-0545">Nucleotide biosynthesis</keyword>
<keyword id="KW-0808">Transferase</keyword>
<gene>
    <name evidence="1" type="primary">thyA</name>
    <name type="ordered locus">RPD_3354</name>
</gene>
<dbReference type="EC" id="2.1.1.45" evidence="1"/>
<dbReference type="EMBL" id="CP000283">
    <property type="protein sequence ID" value="ABE40578.1"/>
    <property type="molecule type" value="Genomic_DNA"/>
</dbReference>
<dbReference type="SMR" id="Q134B1"/>
<dbReference type="STRING" id="316057.RPD_3354"/>
<dbReference type="KEGG" id="rpd:RPD_3354"/>
<dbReference type="eggNOG" id="COG0207">
    <property type="taxonomic scope" value="Bacteria"/>
</dbReference>
<dbReference type="HOGENOM" id="CLU_021669_0_0_5"/>
<dbReference type="BioCyc" id="RPAL316057:RPD_RS16865-MONOMER"/>
<dbReference type="UniPathway" id="UPA00575"/>
<dbReference type="Proteomes" id="UP000001818">
    <property type="component" value="Chromosome"/>
</dbReference>
<dbReference type="GO" id="GO:0005829">
    <property type="term" value="C:cytosol"/>
    <property type="evidence" value="ECO:0007669"/>
    <property type="project" value="TreeGrafter"/>
</dbReference>
<dbReference type="GO" id="GO:0004799">
    <property type="term" value="F:thymidylate synthase activity"/>
    <property type="evidence" value="ECO:0007669"/>
    <property type="project" value="UniProtKB-UniRule"/>
</dbReference>
<dbReference type="GO" id="GO:0006231">
    <property type="term" value="P:dTMP biosynthetic process"/>
    <property type="evidence" value="ECO:0007669"/>
    <property type="project" value="UniProtKB-UniRule"/>
</dbReference>
<dbReference type="GO" id="GO:0006235">
    <property type="term" value="P:dTTP biosynthetic process"/>
    <property type="evidence" value="ECO:0007669"/>
    <property type="project" value="UniProtKB-UniRule"/>
</dbReference>
<dbReference type="GO" id="GO:0032259">
    <property type="term" value="P:methylation"/>
    <property type="evidence" value="ECO:0007669"/>
    <property type="project" value="UniProtKB-KW"/>
</dbReference>
<dbReference type="CDD" id="cd00351">
    <property type="entry name" value="TS_Pyrimidine_HMase"/>
    <property type="match status" value="1"/>
</dbReference>
<dbReference type="FunFam" id="3.30.572.10:FF:000001">
    <property type="entry name" value="Thymidylate synthase"/>
    <property type="match status" value="1"/>
</dbReference>
<dbReference type="Gene3D" id="3.30.572.10">
    <property type="entry name" value="Thymidylate synthase/dCMP hydroxymethylase domain"/>
    <property type="match status" value="1"/>
</dbReference>
<dbReference type="HAMAP" id="MF_00008">
    <property type="entry name" value="Thymidy_synth_bact"/>
    <property type="match status" value="1"/>
</dbReference>
<dbReference type="InterPro" id="IPR045097">
    <property type="entry name" value="Thymidate_synth/dCMP_Mease"/>
</dbReference>
<dbReference type="InterPro" id="IPR023451">
    <property type="entry name" value="Thymidate_synth/dCMP_Mease_dom"/>
</dbReference>
<dbReference type="InterPro" id="IPR036926">
    <property type="entry name" value="Thymidate_synth/dCMP_Mease_sf"/>
</dbReference>
<dbReference type="InterPro" id="IPR000398">
    <property type="entry name" value="Thymidylate_synthase"/>
</dbReference>
<dbReference type="InterPro" id="IPR020940">
    <property type="entry name" value="Thymidylate_synthase_AS"/>
</dbReference>
<dbReference type="NCBIfam" id="NF002497">
    <property type="entry name" value="PRK01827.1-3"/>
    <property type="match status" value="1"/>
</dbReference>
<dbReference type="NCBIfam" id="NF002499">
    <property type="entry name" value="PRK01827.1-5"/>
    <property type="match status" value="1"/>
</dbReference>
<dbReference type="NCBIfam" id="TIGR03284">
    <property type="entry name" value="thym_sym"/>
    <property type="match status" value="2"/>
</dbReference>
<dbReference type="PANTHER" id="PTHR11548:SF9">
    <property type="entry name" value="THYMIDYLATE SYNTHASE"/>
    <property type="match status" value="1"/>
</dbReference>
<dbReference type="PANTHER" id="PTHR11548">
    <property type="entry name" value="THYMIDYLATE SYNTHASE 1"/>
    <property type="match status" value="1"/>
</dbReference>
<dbReference type="Pfam" id="PF00303">
    <property type="entry name" value="Thymidylat_synt"/>
    <property type="match status" value="1"/>
</dbReference>
<dbReference type="PRINTS" id="PR00108">
    <property type="entry name" value="THYMDSNTHASE"/>
</dbReference>
<dbReference type="SUPFAM" id="SSF55831">
    <property type="entry name" value="Thymidylate synthase/dCMP hydroxymethylase"/>
    <property type="match status" value="1"/>
</dbReference>
<dbReference type="PROSITE" id="PS00091">
    <property type="entry name" value="THYMIDYLATE_SYNTHASE"/>
    <property type="match status" value="1"/>
</dbReference>
<name>TYSY_RHOPS</name>